<accession>P80787</accession>
<reference evidence="3" key="1">
    <citation type="journal article" date="1997" name="J. Biol. Chem.">
        <title>Differential extraction and protein sequencing reveals major differences in patterns of primary cell wall proteins from plants.</title>
        <authorList>
            <person name="Robertson D."/>
            <person name="Mitchell G.P."/>
            <person name="Gilroy J.S."/>
            <person name="Gerrish C."/>
            <person name="Bolwell G.P."/>
            <person name="Slabas A.R."/>
        </authorList>
    </citation>
    <scope>PROTEIN SEQUENCE</scope>
    <scope>SUBCELLULAR LOCATION</scope>
</reference>
<keyword id="KW-0134">Cell wall</keyword>
<keyword id="KW-0903">Direct protein sequencing</keyword>
<keyword id="KW-1185">Reference proteome</keyword>
<keyword id="KW-0964">Secreted</keyword>
<protein>
    <recommendedName>
        <fullName>48 kDa cell wall protein</fullName>
    </recommendedName>
</protein>
<proteinExistence type="evidence at protein level"/>
<feature type="chain" id="PRO_0000079660" description="48 kDa cell wall protein">
    <location>
        <begin position="1"/>
        <end position="23" status="greater than"/>
    </location>
</feature>
<feature type="non-terminal residue" evidence="2">
    <location>
        <position position="23"/>
    </location>
</feature>
<dbReference type="PaxDb" id="4097-P80787"/>
<dbReference type="Proteomes" id="UP000084051">
    <property type="component" value="Unplaced"/>
</dbReference>
<dbReference type="GO" id="GO:0005576">
    <property type="term" value="C:extracellular region"/>
    <property type="evidence" value="ECO:0007669"/>
    <property type="project" value="UniProtKB-KW"/>
</dbReference>
<organism>
    <name type="scientific">Nicotiana tabacum</name>
    <name type="common">Common tobacco</name>
    <dbReference type="NCBI Taxonomy" id="4097"/>
    <lineage>
        <taxon>Eukaryota</taxon>
        <taxon>Viridiplantae</taxon>
        <taxon>Streptophyta</taxon>
        <taxon>Embryophyta</taxon>
        <taxon>Tracheophyta</taxon>
        <taxon>Spermatophyta</taxon>
        <taxon>Magnoliopsida</taxon>
        <taxon>eudicotyledons</taxon>
        <taxon>Gunneridae</taxon>
        <taxon>Pentapetalae</taxon>
        <taxon>asterids</taxon>
        <taxon>lamiids</taxon>
        <taxon>Solanales</taxon>
        <taxon>Solanaceae</taxon>
        <taxon>Nicotianoideae</taxon>
        <taxon>Nicotianeae</taxon>
        <taxon>Nicotiana</taxon>
    </lineage>
</organism>
<sequence length="23" mass="2772">QYVKDPDKQVVARIFLDLQLVQR</sequence>
<comment type="subcellular location">
    <subcellularLocation>
        <location evidence="1">Secreted</location>
        <location evidence="1">Cell wall</location>
    </subcellularLocation>
</comment>
<evidence type="ECO:0000269" key="1">
    <source>
    </source>
</evidence>
<evidence type="ECO:0000303" key="2">
    <source>
    </source>
</evidence>
<evidence type="ECO:0000305" key="3"/>
<name>CWP10_TOBAC</name>